<feature type="chain" id="PRO_0000083858" description="Glycine-rich protein DC9.1">
    <location>
        <begin position="1"/>
        <end position="144"/>
    </location>
</feature>
<feature type="transmembrane region" description="Helical" evidence="1">
    <location>
        <begin position="5"/>
        <end position="25"/>
    </location>
</feature>
<feature type="repeat" description="1">
    <location>
        <begin position="37"/>
        <end position="42"/>
    </location>
</feature>
<feature type="repeat" description="2">
    <location>
        <begin position="43"/>
        <end position="48"/>
    </location>
</feature>
<feature type="repeat" description="3">
    <location>
        <begin position="50"/>
        <end position="55"/>
    </location>
</feature>
<feature type="repeat" description="4">
    <location>
        <begin position="56"/>
        <end position="61"/>
    </location>
</feature>
<feature type="repeat" description="5">
    <location>
        <begin position="63"/>
        <end position="68"/>
    </location>
</feature>
<feature type="repeat" description="6">
    <location>
        <begin position="69"/>
        <end position="74"/>
    </location>
</feature>
<feature type="repeat" description="7">
    <location>
        <begin position="76"/>
        <end position="81"/>
    </location>
</feature>
<feature type="repeat" description="8">
    <location>
        <begin position="82"/>
        <end position="87"/>
    </location>
</feature>
<feature type="repeat" description="9">
    <location>
        <begin position="89"/>
        <end position="94"/>
    </location>
</feature>
<feature type="repeat" description="10">
    <location>
        <begin position="102"/>
        <end position="107"/>
    </location>
</feature>
<feature type="repeat" description="11">
    <location>
        <begin position="108"/>
        <end position="113"/>
    </location>
</feature>
<feature type="region of interest" description="11 X 6 AA tandem repeats of G-Y-[NH]-N-G -G">
    <location>
        <begin position="37"/>
        <end position="113"/>
    </location>
</feature>
<proteinExistence type="evidence at transcript level"/>
<dbReference type="PIR" id="S35716">
    <property type="entry name" value="S35716"/>
</dbReference>
<dbReference type="SMR" id="P37703"/>
<dbReference type="GO" id="GO:0016020">
    <property type="term" value="C:membrane"/>
    <property type="evidence" value="ECO:0007669"/>
    <property type="project" value="UniProtKB-SubCell"/>
</dbReference>
<dbReference type="InterPro" id="IPR010800">
    <property type="entry name" value="GRP"/>
</dbReference>
<dbReference type="PANTHER" id="PTHR37389:SF34">
    <property type="entry name" value="GLYCINE-RICH PROTEIN"/>
    <property type="match status" value="1"/>
</dbReference>
<dbReference type="PANTHER" id="PTHR37389">
    <property type="entry name" value="NODULIN-24"/>
    <property type="match status" value="1"/>
</dbReference>
<dbReference type="Pfam" id="PF07172">
    <property type="entry name" value="GRP"/>
    <property type="match status" value="1"/>
</dbReference>
<reference key="1">
    <citation type="journal article" date="1991" name="Planta">
        <title>Gene expression during induction of somatic embryogenesis in carrot cell suspensions.</title>
        <authorList>
            <person name="Aleith F."/>
            <person name="Richter G."/>
        </authorList>
    </citation>
    <scope>NUCLEOTIDE SEQUENCE [MRNA]</scope>
    <scope>DEVELOPMENTAL STAGE</scope>
</reference>
<evidence type="ECO:0000255" key="1"/>
<evidence type="ECO:0000269" key="2">
    <source ref="1"/>
</evidence>
<evidence type="ECO:0000305" key="3"/>
<name>GRP9_DAUCA</name>
<keyword id="KW-0472">Membrane</keyword>
<keyword id="KW-0677">Repeat</keyword>
<keyword id="KW-0812">Transmembrane</keyword>
<keyword id="KW-1133">Transmembrane helix</keyword>
<organism>
    <name type="scientific">Daucus carota</name>
    <name type="common">Wild carrot</name>
    <dbReference type="NCBI Taxonomy" id="4039"/>
    <lineage>
        <taxon>Eukaryota</taxon>
        <taxon>Viridiplantae</taxon>
        <taxon>Streptophyta</taxon>
        <taxon>Embryophyta</taxon>
        <taxon>Tracheophyta</taxon>
        <taxon>Spermatophyta</taxon>
        <taxon>Magnoliopsida</taxon>
        <taxon>eudicotyledons</taxon>
        <taxon>Gunneridae</taxon>
        <taxon>Pentapetalae</taxon>
        <taxon>asterids</taxon>
        <taxon>campanulids</taxon>
        <taxon>Apiales</taxon>
        <taxon>Apiaceae</taxon>
        <taxon>Apioideae</taxon>
        <taxon>Scandiceae</taxon>
        <taxon>Daucinae</taxon>
        <taxon>Daucus</taxon>
        <taxon>Daucus sect. Daucus</taxon>
    </lineage>
</organism>
<accession>P37703</accession>
<protein>
    <recommendedName>
        <fullName>Glycine-rich protein DC9.1</fullName>
    </recommendedName>
</protein>
<comment type="subcellular location">
    <subcellularLocation>
        <location evidence="3">Membrane</location>
        <topology evidence="3">Single-pass membrane protein</topology>
    </subcellularLocation>
</comment>
<comment type="developmental stage">
    <text evidence="2">Expressed at the onset of somatic embryogenesis.</text>
</comment>
<comment type="similarity">
    <text evidence="3">Belongs to the GRP family.</text>
</comment>
<sequence length="144" mass="14111">MGSKIFLLLGLSIAFAILISSEVAARELAETAAKTEGYNNGGGYHNGGGGYNNGGGYHNGGGGYNNGGGYHNGGGGYNNGGGYHNGGGGYNNGGGHHNGGGGYNNGGGHHGGGGSCYHYCHGRCCSAAEAKALEATTAQVKPQN</sequence>